<reference key="1">
    <citation type="journal article" date="2010" name="Proc. Natl. Acad. Sci. U.S.A.">
        <title>Nitrosopumilus maritimus genome reveals unique mechanisms for nitrification and autotrophy in globally distributed marine crenarchaea.</title>
        <authorList>
            <person name="Walker C.B."/>
            <person name="de la Torre J.R."/>
            <person name="Klotz M.G."/>
            <person name="Urakawa H."/>
            <person name="Pinel N."/>
            <person name="Arp D.J."/>
            <person name="Brochier-Armanet C."/>
            <person name="Chain P.S."/>
            <person name="Chan P.P."/>
            <person name="Gollabgir A."/>
            <person name="Hemp J."/>
            <person name="Hugler M."/>
            <person name="Karr E.A."/>
            <person name="Konneke M."/>
            <person name="Shin M."/>
            <person name="Lawton T.J."/>
            <person name="Lowe T."/>
            <person name="Martens-Habbena W."/>
            <person name="Sayavedra-Soto L.A."/>
            <person name="Lang D."/>
            <person name="Sievert S.M."/>
            <person name="Rosenzweig A.C."/>
            <person name="Manning G."/>
            <person name="Stahl D.A."/>
        </authorList>
    </citation>
    <scope>NUCLEOTIDE SEQUENCE [LARGE SCALE GENOMIC DNA]</scope>
    <source>
        <strain>SCM1</strain>
    </source>
</reference>
<keyword id="KW-0413">Isomerase</keyword>
<keyword id="KW-0479">Metal-binding</keyword>
<keyword id="KW-0520">NAD</keyword>
<keyword id="KW-0521">NADP</keyword>
<keyword id="KW-0547">Nucleotide-binding</keyword>
<keyword id="KW-0630">Potassium</keyword>
<keyword id="KW-1185">Reference proteome</keyword>
<comment type="function">
    <text evidence="1">Catalyzes the epimerization of the S- and R-forms of NAD(P)HX, a damaged form of NAD(P)H that is a result of enzymatic or heat-dependent hydration. This is a prerequisite for the S-specific NAD(P)H-hydrate dehydratase to allow the repair of both epimers of NAD(P)HX.</text>
</comment>
<comment type="catalytic activity">
    <reaction evidence="1">
        <text>(6R)-NADHX = (6S)-NADHX</text>
        <dbReference type="Rhea" id="RHEA:32215"/>
        <dbReference type="ChEBI" id="CHEBI:64074"/>
        <dbReference type="ChEBI" id="CHEBI:64075"/>
        <dbReference type="EC" id="5.1.99.6"/>
    </reaction>
</comment>
<comment type="catalytic activity">
    <reaction evidence="1">
        <text>(6R)-NADPHX = (6S)-NADPHX</text>
        <dbReference type="Rhea" id="RHEA:32227"/>
        <dbReference type="ChEBI" id="CHEBI:64076"/>
        <dbReference type="ChEBI" id="CHEBI:64077"/>
        <dbReference type="EC" id="5.1.99.6"/>
    </reaction>
</comment>
<comment type="cofactor">
    <cofactor evidence="1">
        <name>K(+)</name>
        <dbReference type="ChEBI" id="CHEBI:29103"/>
    </cofactor>
    <text evidence="1">Binds 1 potassium ion per subunit.</text>
</comment>
<comment type="similarity">
    <text evidence="1">Belongs to the NnrE/AIBP family.</text>
</comment>
<dbReference type="EC" id="5.1.99.6" evidence="1"/>
<dbReference type="EMBL" id="CP000866">
    <property type="protein sequence ID" value="ABX12216.1"/>
    <property type="molecule type" value="Genomic_DNA"/>
</dbReference>
<dbReference type="RefSeq" id="WP_012214703.1">
    <property type="nucleotide sequence ID" value="NC_010085.1"/>
</dbReference>
<dbReference type="SMR" id="A9A432"/>
<dbReference type="STRING" id="436308.Nmar_0320"/>
<dbReference type="EnsemblBacteria" id="ABX12216">
    <property type="protein sequence ID" value="ABX12216"/>
    <property type="gene ID" value="Nmar_0320"/>
</dbReference>
<dbReference type="GeneID" id="5774607"/>
<dbReference type="KEGG" id="nmr:Nmar_0320"/>
<dbReference type="eggNOG" id="arCOG00018">
    <property type="taxonomic scope" value="Archaea"/>
</dbReference>
<dbReference type="HOGENOM" id="CLU_024853_0_1_2"/>
<dbReference type="InParanoid" id="A9A432"/>
<dbReference type="OrthoDB" id="15148at2157"/>
<dbReference type="PhylomeDB" id="A9A432"/>
<dbReference type="Proteomes" id="UP000000792">
    <property type="component" value="Chromosome"/>
</dbReference>
<dbReference type="GO" id="GO:0046872">
    <property type="term" value="F:metal ion binding"/>
    <property type="evidence" value="ECO:0007669"/>
    <property type="project" value="UniProtKB-KW"/>
</dbReference>
<dbReference type="GO" id="GO:0052856">
    <property type="term" value="F:NAD(P)HX epimerase activity"/>
    <property type="evidence" value="ECO:0007669"/>
    <property type="project" value="UniProtKB-UniRule"/>
</dbReference>
<dbReference type="GO" id="GO:0000166">
    <property type="term" value="F:nucleotide binding"/>
    <property type="evidence" value="ECO:0007669"/>
    <property type="project" value="UniProtKB-KW"/>
</dbReference>
<dbReference type="Gene3D" id="3.40.50.10260">
    <property type="entry name" value="YjeF N-terminal domain"/>
    <property type="match status" value="1"/>
</dbReference>
<dbReference type="HAMAP" id="MF_01966">
    <property type="entry name" value="NADHX_epimerase"/>
    <property type="match status" value="1"/>
</dbReference>
<dbReference type="InterPro" id="IPR004443">
    <property type="entry name" value="YjeF_N_dom"/>
</dbReference>
<dbReference type="InterPro" id="IPR036652">
    <property type="entry name" value="YjeF_N_dom_sf"/>
</dbReference>
<dbReference type="InterPro" id="IPR032976">
    <property type="entry name" value="YJEFN_prot_NAXE-like"/>
</dbReference>
<dbReference type="NCBIfam" id="TIGR00197">
    <property type="entry name" value="yjeF_nterm"/>
    <property type="match status" value="1"/>
</dbReference>
<dbReference type="PANTHER" id="PTHR13232">
    <property type="entry name" value="NAD(P)H-HYDRATE EPIMERASE"/>
    <property type="match status" value="1"/>
</dbReference>
<dbReference type="PANTHER" id="PTHR13232:SF10">
    <property type="entry name" value="NAD(P)H-HYDRATE EPIMERASE"/>
    <property type="match status" value="1"/>
</dbReference>
<dbReference type="Pfam" id="PF03853">
    <property type="entry name" value="YjeF_N"/>
    <property type="match status" value="1"/>
</dbReference>
<dbReference type="SUPFAM" id="SSF64153">
    <property type="entry name" value="YjeF N-terminal domain-like"/>
    <property type="match status" value="1"/>
</dbReference>
<dbReference type="PROSITE" id="PS51385">
    <property type="entry name" value="YJEF_N"/>
    <property type="match status" value="1"/>
</dbReference>
<proteinExistence type="inferred from homology"/>
<accession>A9A432</accession>
<evidence type="ECO:0000255" key="1">
    <source>
        <dbReference type="HAMAP-Rule" id="MF_01966"/>
    </source>
</evidence>
<feature type="chain" id="PRO_0000416382" description="NAD(P)H-hydrate epimerase">
    <location>
        <begin position="1"/>
        <end position="215"/>
    </location>
</feature>
<feature type="domain" description="YjeF N-terminal" evidence="1">
    <location>
        <begin position="8"/>
        <end position="212"/>
    </location>
</feature>
<feature type="binding site" evidence="1">
    <location>
        <begin position="57"/>
        <end position="61"/>
    </location>
    <ligand>
        <name>(6S)-NADPHX</name>
        <dbReference type="ChEBI" id="CHEBI:64076"/>
    </ligand>
</feature>
<feature type="binding site" evidence="1">
    <location>
        <position position="58"/>
    </location>
    <ligand>
        <name>K(+)</name>
        <dbReference type="ChEBI" id="CHEBI:29103"/>
    </ligand>
</feature>
<feature type="binding site" evidence="1">
    <location>
        <position position="124"/>
    </location>
    <ligand>
        <name>K(+)</name>
        <dbReference type="ChEBI" id="CHEBI:29103"/>
    </ligand>
</feature>
<feature type="binding site" evidence="1">
    <location>
        <begin position="128"/>
        <end position="134"/>
    </location>
    <ligand>
        <name>(6S)-NADPHX</name>
        <dbReference type="ChEBI" id="CHEBI:64076"/>
    </ligand>
</feature>
<feature type="binding site" evidence="1">
    <location>
        <position position="139"/>
    </location>
    <ligand>
        <name>(6S)-NADPHX</name>
        <dbReference type="ChEBI" id="CHEBI:64076"/>
    </ligand>
</feature>
<feature type="binding site" evidence="1">
    <location>
        <position position="157"/>
    </location>
    <ligand>
        <name>(6S)-NADPHX</name>
        <dbReference type="ChEBI" id="CHEBI:64076"/>
    </ligand>
</feature>
<feature type="binding site" evidence="1">
    <location>
        <position position="160"/>
    </location>
    <ligand>
        <name>K(+)</name>
        <dbReference type="ChEBI" id="CHEBI:29103"/>
    </ligand>
</feature>
<name>NNRE_NITMS</name>
<gene>
    <name evidence="1" type="primary">nnrE</name>
    <name type="ordered locus">Nmar_0320</name>
</gene>
<sequence length="215" mass="23584">MEITVDQMYNIENKGHDMGFLKKFMMENAGAAAVKRLVEKLGNVDSKNILIFVGMGNNGGDGLVMARHLAGYNAKVTVMLLGNPENIKTEESNWNWSILEKMPSVKLMTGGTTNFDFKPDVIVDGILGTGISGEIREPYASAINYINQTDCYKFAVDVPSGLDPQTGETANIFTKCDMTVTFHKMKQGIPKRKDLTGELFAEKIGIPPEAEEGIL</sequence>
<protein>
    <recommendedName>
        <fullName evidence="1">NAD(P)H-hydrate epimerase</fullName>
        <ecNumber evidence="1">5.1.99.6</ecNumber>
    </recommendedName>
    <alternativeName>
        <fullName evidence="1">NAD(P)HX epimerase</fullName>
    </alternativeName>
</protein>
<organism>
    <name type="scientific">Nitrosopumilus maritimus (strain SCM1)</name>
    <dbReference type="NCBI Taxonomy" id="436308"/>
    <lineage>
        <taxon>Archaea</taxon>
        <taxon>Nitrososphaerota</taxon>
        <taxon>Nitrososphaeria</taxon>
        <taxon>Nitrosopumilales</taxon>
        <taxon>Nitrosopumilaceae</taxon>
        <taxon>Nitrosopumilus</taxon>
    </lineage>
</organism>